<organism>
    <name type="scientific">Nostoc sp. (strain PCC 7120 / SAG 25.82 / UTEX 2576)</name>
    <dbReference type="NCBI Taxonomy" id="103690"/>
    <lineage>
        <taxon>Bacteria</taxon>
        <taxon>Bacillati</taxon>
        <taxon>Cyanobacteriota</taxon>
        <taxon>Cyanophyceae</taxon>
        <taxon>Nostocales</taxon>
        <taxon>Nostocaceae</taxon>
        <taxon>Nostoc</taxon>
    </lineage>
</organism>
<name>ACP_NOSS1</name>
<feature type="initiator methionine" description="Removed" evidence="1">
    <location>
        <position position="1"/>
    </location>
</feature>
<feature type="chain" id="PRO_0000180092" description="Acyl carrier protein">
    <location>
        <begin position="2"/>
        <end position="84"/>
    </location>
</feature>
<feature type="domain" description="Carrier" evidence="3">
    <location>
        <begin position="4"/>
        <end position="80"/>
    </location>
</feature>
<feature type="modified residue" description="O-(pantetheine 4'-phosphoryl)serine" evidence="3">
    <location>
        <position position="40"/>
    </location>
</feature>
<accession>P58553</accession>
<gene>
    <name evidence="2" type="primary">acpP</name>
    <name type="ordered locus">asr3342</name>
</gene>
<evidence type="ECO:0000250" key="1"/>
<evidence type="ECO:0000255" key="2">
    <source>
        <dbReference type="HAMAP-Rule" id="MF_01217"/>
    </source>
</evidence>
<evidence type="ECO:0000255" key="3">
    <source>
        <dbReference type="PROSITE-ProRule" id="PRU00258"/>
    </source>
</evidence>
<comment type="function">
    <text evidence="2">Carrier of the growing fatty acid chain in fatty acid biosynthesis.</text>
</comment>
<comment type="pathway">
    <text evidence="2">Lipid metabolism; fatty acid biosynthesis.</text>
</comment>
<comment type="subcellular location">
    <subcellularLocation>
        <location evidence="2">Cytoplasm</location>
    </subcellularLocation>
</comment>
<comment type="PTM">
    <text evidence="2">4'-phosphopantetheine is transferred from CoA to a specific serine of apo-ACP by AcpS. This modification is essential for activity because fatty acids are bound in thioester linkage to the sulfhydryl of the prosthetic group.</text>
</comment>
<comment type="similarity">
    <text evidence="2">Belongs to the acyl carrier protein (ACP) family.</text>
</comment>
<proteinExistence type="inferred from homology"/>
<protein>
    <recommendedName>
        <fullName evidence="2">Acyl carrier protein</fullName>
        <shortName evidence="2">ACP</shortName>
    </recommendedName>
</protein>
<reference key="1">
    <citation type="journal article" date="2001" name="DNA Res.">
        <title>Complete genomic sequence of the filamentous nitrogen-fixing cyanobacterium Anabaena sp. strain PCC 7120.</title>
        <authorList>
            <person name="Kaneko T."/>
            <person name="Nakamura Y."/>
            <person name="Wolk C.P."/>
            <person name="Kuritz T."/>
            <person name="Sasamoto S."/>
            <person name="Watanabe A."/>
            <person name="Iriguchi M."/>
            <person name="Ishikawa A."/>
            <person name="Kawashima K."/>
            <person name="Kimura T."/>
            <person name="Kishida Y."/>
            <person name="Kohara M."/>
            <person name="Matsumoto M."/>
            <person name="Matsuno A."/>
            <person name="Muraki A."/>
            <person name="Nakazaki N."/>
            <person name="Shimpo S."/>
            <person name="Sugimoto M."/>
            <person name="Takazawa M."/>
            <person name="Yamada M."/>
            <person name="Yasuda M."/>
            <person name="Tabata S."/>
        </authorList>
    </citation>
    <scope>NUCLEOTIDE SEQUENCE [LARGE SCALE GENOMIC DNA]</scope>
    <source>
        <strain>PCC 7120 / SAG 25.82 / UTEX 2576</strain>
    </source>
</reference>
<sequence length="84" mass="9247">MSQSETFEKVKKIVIEQLSVENPDTVTPEASFANDLQADSLDTVELVMALEEEFDIEIPDEAAEKITTVQEAVDYINNQVAASA</sequence>
<keyword id="KW-0963">Cytoplasm</keyword>
<keyword id="KW-0275">Fatty acid biosynthesis</keyword>
<keyword id="KW-0276">Fatty acid metabolism</keyword>
<keyword id="KW-0444">Lipid biosynthesis</keyword>
<keyword id="KW-0443">Lipid metabolism</keyword>
<keyword id="KW-0596">Phosphopantetheine</keyword>
<keyword id="KW-0597">Phosphoprotein</keyword>
<keyword id="KW-1185">Reference proteome</keyword>
<dbReference type="EMBL" id="BA000019">
    <property type="protein sequence ID" value="BAB75041.1"/>
    <property type="molecule type" value="Genomic_DNA"/>
</dbReference>
<dbReference type="PIR" id="AG2223">
    <property type="entry name" value="AG2223"/>
</dbReference>
<dbReference type="RefSeq" id="WP_010997493.1">
    <property type="nucleotide sequence ID" value="NZ_RSCN01000038.1"/>
</dbReference>
<dbReference type="SMR" id="P58553"/>
<dbReference type="STRING" id="103690.gene:10495380"/>
<dbReference type="KEGG" id="ana:asr3342"/>
<dbReference type="eggNOG" id="COG0236">
    <property type="taxonomic scope" value="Bacteria"/>
</dbReference>
<dbReference type="OrthoDB" id="9804551at2"/>
<dbReference type="UniPathway" id="UPA00094"/>
<dbReference type="Proteomes" id="UP000002483">
    <property type="component" value="Chromosome"/>
</dbReference>
<dbReference type="GO" id="GO:0005829">
    <property type="term" value="C:cytosol"/>
    <property type="evidence" value="ECO:0007669"/>
    <property type="project" value="TreeGrafter"/>
</dbReference>
<dbReference type="GO" id="GO:0016020">
    <property type="term" value="C:membrane"/>
    <property type="evidence" value="ECO:0007669"/>
    <property type="project" value="GOC"/>
</dbReference>
<dbReference type="GO" id="GO:0000035">
    <property type="term" value="F:acyl binding"/>
    <property type="evidence" value="ECO:0007669"/>
    <property type="project" value="TreeGrafter"/>
</dbReference>
<dbReference type="GO" id="GO:0000036">
    <property type="term" value="F:acyl carrier activity"/>
    <property type="evidence" value="ECO:0007669"/>
    <property type="project" value="UniProtKB-UniRule"/>
</dbReference>
<dbReference type="GO" id="GO:0009245">
    <property type="term" value="P:lipid A biosynthetic process"/>
    <property type="evidence" value="ECO:0007669"/>
    <property type="project" value="TreeGrafter"/>
</dbReference>
<dbReference type="FunFam" id="1.10.1200.10:FF:000001">
    <property type="entry name" value="Acyl carrier protein"/>
    <property type="match status" value="1"/>
</dbReference>
<dbReference type="Gene3D" id="1.10.1200.10">
    <property type="entry name" value="ACP-like"/>
    <property type="match status" value="1"/>
</dbReference>
<dbReference type="HAMAP" id="MF_01217">
    <property type="entry name" value="Acyl_carrier"/>
    <property type="match status" value="1"/>
</dbReference>
<dbReference type="InterPro" id="IPR003231">
    <property type="entry name" value="ACP"/>
</dbReference>
<dbReference type="InterPro" id="IPR036736">
    <property type="entry name" value="ACP-like_sf"/>
</dbReference>
<dbReference type="InterPro" id="IPR009081">
    <property type="entry name" value="PP-bd_ACP"/>
</dbReference>
<dbReference type="InterPro" id="IPR006162">
    <property type="entry name" value="Ppantetheine_attach_site"/>
</dbReference>
<dbReference type="NCBIfam" id="TIGR00517">
    <property type="entry name" value="acyl_carrier"/>
    <property type="match status" value="1"/>
</dbReference>
<dbReference type="NCBIfam" id="NF002148">
    <property type="entry name" value="PRK00982.1-2"/>
    <property type="match status" value="1"/>
</dbReference>
<dbReference type="NCBIfam" id="NF002149">
    <property type="entry name" value="PRK00982.1-3"/>
    <property type="match status" value="1"/>
</dbReference>
<dbReference type="NCBIfam" id="NF002150">
    <property type="entry name" value="PRK00982.1-4"/>
    <property type="match status" value="1"/>
</dbReference>
<dbReference type="NCBIfam" id="NF002151">
    <property type="entry name" value="PRK00982.1-5"/>
    <property type="match status" value="1"/>
</dbReference>
<dbReference type="PANTHER" id="PTHR20863">
    <property type="entry name" value="ACYL CARRIER PROTEIN"/>
    <property type="match status" value="1"/>
</dbReference>
<dbReference type="PANTHER" id="PTHR20863:SF76">
    <property type="entry name" value="CARRIER DOMAIN-CONTAINING PROTEIN"/>
    <property type="match status" value="1"/>
</dbReference>
<dbReference type="Pfam" id="PF00550">
    <property type="entry name" value="PP-binding"/>
    <property type="match status" value="1"/>
</dbReference>
<dbReference type="SUPFAM" id="SSF47336">
    <property type="entry name" value="ACP-like"/>
    <property type="match status" value="1"/>
</dbReference>
<dbReference type="PROSITE" id="PS50075">
    <property type="entry name" value="CARRIER"/>
    <property type="match status" value="1"/>
</dbReference>
<dbReference type="PROSITE" id="PS00012">
    <property type="entry name" value="PHOSPHOPANTETHEINE"/>
    <property type="match status" value="1"/>
</dbReference>